<feature type="signal peptide" evidence="4">
    <location>
        <begin position="1"/>
        <end position="25"/>
    </location>
</feature>
<feature type="chain" id="PRO_0000042630" description="Activin receptor type-1C">
    <location>
        <begin position="26"/>
        <end position="493"/>
    </location>
</feature>
<feature type="topological domain" description="Extracellular" evidence="4">
    <location>
        <begin position="26"/>
        <end position="113"/>
    </location>
</feature>
<feature type="transmembrane region" description="Helical" evidence="4">
    <location>
        <begin position="114"/>
        <end position="134"/>
    </location>
</feature>
<feature type="topological domain" description="Cytoplasmic" evidence="4">
    <location>
        <begin position="135"/>
        <end position="493"/>
    </location>
</feature>
<feature type="domain" description="GS" evidence="6">
    <location>
        <begin position="165"/>
        <end position="194"/>
    </location>
</feature>
<feature type="domain" description="Protein kinase" evidence="5">
    <location>
        <begin position="195"/>
        <end position="485"/>
    </location>
</feature>
<feature type="active site" description="Proton acceptor" evidence="1 5 7">
    <location>
        <position position="323"/>
    </location>
</feature>
<feature type="binding site" evidence="1 5">
    <location>
        <begin position="201"/>
        <end position="209"/>
    </location>
    <ligand>
        <name>ATP</name>
        <dbReference type="ChEBI" id="CHEBI:30616"/>
    </ligand>
</feature>
<feature type="binding site" evidence="1 5">
    <location>
        <position position="222"/>
    </location>
    <ligand>
        <name>ATP</name>
        <dbReference type="ChEBI" id="CHEBI:30616"/>
    </ligand>
</feature>
<feature type="mutagenesis site" description="Constitutively activates downstream transcription factor function." evidence="11 13">
    <original>T</original>
    <variation>D</variation>
    <location>
        <position position="194"/>
    </location>
</feature>
<feature type="mutagenesis site" description="Fails to activate downstream transcription factor function." evidence="11">
    <original>K</original>
    <variation>R</variation>
    <location>
        <position position="222"/>
    </location>
</feature>
<feature type="sequence conflict" description="In Ref. 2; AAC52919." evidence="14" ref="2">
    <original>R</original>
    <variation>S</variation>
    <location>
        <position position="5"/>
    </location>
</feature>
<feature type="sequence conflict" description="In Ref. 2; AAC52919." evidence="14" ref="2">
    <original>S</original>
    <variation>I</variation>
    <location>
        <position position="60"/>
    </location>
</feature>
<feature type="sequence conflict" description="In Ref. 2; AAC52919." evidence="14" ref="2">
    <original>Q</original>
    <variation>L</variation>
    <location>
        <position position="97"/>
    </location>
</feature>
<feature type="sequence conflict" description="In Ref. 2; AAC52919." evidence="14" ref="2">
    <original>P</original>
    <variation>L</variation>
    <location>
        <position position="183"/>
    </location>
</feature>
<organism>
    <name type="scientific">Rattus norvegicus</name>
    <name type="common">Rat</name>
    <dbReference type="NCBI Taxonomy" id="10116"/>
    <lineage>
        <taxon>Eukaryota</taxon>
        <taxon>Metazoa</taxon>
        <taxon>Chordata</taxon>
        <taxon>Craniata</taxon>
        <taxon>Vertebrata</taxon>
        <taxon>Euteleostomi</taxon>
        <taxon>Mammalia</taxon>
        <taxon>Eutheria</taxon>
        <taxon>Euarchontoglires</taxon>
        <taxon>Glires</taxon>
        <taxon>Rodentia</taxon>
        <taxon>Myomorpha</taxon>
        <taxon>Muroidea</taxon>
        <taxon>Muridae</taxon>
        <taxon>Murinae</taxon>
        <taxon>Rattus</taxon>
    </lineage>
</organism>
<accession>P70539</accession>
<accession>P70603</accession>
<sequence length="493" mass="54842">MTPARRSALSLALLLVALASDLAAGLKCVCLLCDSSNFTCQTEGACWASVMLTNGKEQVSKSCVSLPELNAQVFCHSSNNVTKTECCFTDFCNNITQHLPTASPDAPRLGPTELTVVITVPVCLLSIAAMLTIWACQDRQCTYRKTKRHNVEEPLAEYSLVNAGKTLKDLIYDATASGSGSGPPLLVQRTIARTIVLQEIVGKGRFGEVWHGRWCGEDVAVKIFSSRDERSWFREAEIYQTVMLRHENILGFIAADNKDNGTWTQLWLVSEYHEQGSLYDYLNRNIVTVAGMVKLALSIASGLAHLHMEIVGTQGKPAIAHRDIKSKNILVKKCDTCAIADLGLAVKHDSIMNTIDIPQNPKVGTKRYMAPEMLDDTMNVNIFESFKRADIYSVGLVYWEIARRCSVGGLVEEYQLPYYDMVPSDPSIEEMRKVVCDQKLRPNLPNQWQSCEALRVMGRIMRECWYANGAARLTALRVKKTISQLCVKEDCKA</sequence>
<dbReference type="EC" id="2.7.11.30"/>
<dbReference type="EMBL" id="U35025">
    <property type="protein sequence ID" value="AAC52803.1"/>
    <property type="molecule type" value="mRNA"/>
</dbReference>
<dbReference type="EMBL" id="U69702">
    <property type="protein sequence ID" value="AAC52919.1"/>
    <property type="molecule type" value="mRNA"/>
</dbReference>
<dbReference type="RefSeq" id="NP_620790.1">
    <property type="nucleotide sequence ID" value="NM_139090.1"/>
</dbReference>
<dbReference type="SMR" id="P70539"/>
<dbReference type="FunCoup" id="P70539">
    <property type="interactions" value="2108"/>
</dbReference>
<dbReference type="STRING" id="10116.ENSRNOP00000056047"/>
<dbReference type="PhosphoSitePlus" id="P70539"/>
<dbReference type="PaxDb" id="10116-ENSRNOP00000056047"/>
<dbReference type="GeneID" id="245921"/>
<dbReference type="KEGG" id="rno:245921"/>
<dbReference type="UCSC" id="RGD:621789">
    <property type="organism name" value="rat"/>
</dbReference>
<dbReference type="AGR" id="RGD:621789"/>
<dbReference type="CTD" id="130399"/>
<dbReference type="RGD" id="621789">
    <property type="gene designation" value="Acvr1c"/>
</dbReference>
<dbReference type="eggNOG" id="KOG2052">
    <property type="taxonomic scope" value="Eukaryota"/>
</dbReference>
<dbReference type="InParanoid" id="P70539"/>
<dbReference type="PhylomeDB" id="P70539"/>
<dbReference type="Reactome" id="R-RNO-1502540">
    <property type="pathway name" value="Signaling by Activin"/>
</dbReference>
<dbReference type="PRO" id="PR:P70539"/>
<dbReference type="Proteomes" id="UP000002494">
    <property type="component" value="Unplaced"/>
</dbReference>
<dbReference type="GO" id="GO:0048179">
    <property type="term" value="C:activin receptor complex"/>
    <property type="evidence" value="ECO:0000314"/>
    <property type="project" value="UniProtKB"/>
</dbReference>
<dbReference type="GO" id="GO:0009986">
    <property type="term" value="C:cell surface"/>
    <property type="evidence" value="ECO:0000314"/>
    <property type="project" value="MGI"/>
</dbReference>
<dbReference type="GO" id="GO:0005886">
    <property type="term" value="C:plasma membrane"/>
    <property type="evidence" value="ECO:0000318"/>
    <property type="project" value="GO_Central"/>
</dbReference>
<dbReference type="GO" id="GO:0048185">
    <property type="term" value="F:activin binding"/>
    <property type="evidence" value="ECO:0000314"/>
    <property type="project" value="MGI"/>
</dbReference>
<dbReference type="GO" id="GO:0017002">
    <property type="term" value="F:activin receptor activity"/>
    <property type="evidence" value="ECO:0000314"/>
    <property type="project" value="ARUK-UCL"/>
</dbReference>
<dbReference type="GO" id="GO:0016361">
    <property type="term" value="F:activin receptor activity, type I"/>
    <property type="evidence" value="ECO:0000314"/>
    <property type="project" value="UniProtKB"/>
</dbReference>
<dbReference type="GO" id="GO:0005524">
    <property type="term" value="F:ATP binding"/>
    <property type="evidence" value="ECO:0000314"/>
    <property type="project" value="HGNC-UCL"/>
</dbReference>
<dbReference type="GO" id="GO:0070700">
    <property type="term" value="F:BMP receptor binding"/>
    <property type="evidence" value="ECO:0000314"/>
    <property type="project" value="RGD"/>
</dbReference>
<dbReference type="GO" id="GO:0019838">
    <property type="term" value="F:growth factor binding"/>
    <property type="evidence" value="ECO:0000250"/>
    <property type="project" value="CAFA"/>
</dbReference>
<dbReference type="GO" id="GO:0046872">
    <property type="term" value="F:metal ion binding"/>
    <property type="evidence" value="ECO:0000305"/>
    <property type="project" value="UniProtKB"/>
</dbReference>
<dbReference type="GO" id="GO:0038100">
    <property type="term" value="F:nodal binding"/>
    <property type="evidence" value="ECO:0000266"/>
    <property type="project" value="RGD"/>
</dbReference>
<dbReference type="GO" id="GO:0004674">
    <property type="term" value="F:protein serine/threonine kinase activity"/>
    <property type="evidence" value="ECO:0000314"/>
    <property type="project" value="HGNC-UCL"/>
</dbReference>
<dbReference type="GO" id="GO:0046332">
    <property type="term" value="F:SMAD binding"/>
    <property type="evidence" value="ECO:0000314"/>
    <property type="project" value="HGNC-UCL"/>
</dbReference>
<dbReference type="GO" id="GO:0032924">
    <property type="term" value="P:activin receptor signaling pathway"/>
    <property type="evidence" value="ECO:0000314"/>
    <property type="project" value="HGNC-UCL"/>
</dbReference>
<dbReference type="GO" id="GO:0030262">
    <property type="term" value="P:apoptotic nuclear changes"/>
    <property type="evidence" value="ECO:0000266"/>
    <property type="project" value="RGD"/>
</dbReference>
<dbReference type="GO" id="GO:0097190">
    <property type="term" value="P:apoptotic signaling pathway"/>
    <property type="evidence" value="ECO:0000315"/>
    <property type="project" value="BHF-UCL"/>
</dbReference>
<dbReference type="GO" id="GO:0030154">
    <property type="term" value="P:cell differentiation"/>
    <property type="evidence" value="ECO:0000314"/>
    <property type="project" value="UniProtKB"/>
</dbReference>
<dbReference type="GO" id="GO:0071363">
    <property type="term" value="P:cellular response to growth factor stimulus"/>
    <property type="evidence" value="ECO:0000318"/>
    <property type="project" value="GO_Central"/>
</dbReference>
<dbReference type="GO" id="GO:0021549">
    <property type="term" value="P:cerebellum development"/>
    <property type="evidence" value="ECO:0000270"/>
    <property type="project" value="RGD"/>
</dbReference>
<dbReference type="GO" id="GO:0021766">
    <property type="term" value="P:hippocampus development"/>
    <property type="evidence" value="ECO:0000270"/>
    <property type="project" value="RGD"/>
</dbReference>
<dbReference type="GO" id="GO:0030073">
    <property type="term" value="P:insulin secretion"/>
    <property type="evidence" value="ECO:0000266"/>
    <property type="project" value="RGD"/>
</dbReference>
<dbReference type="GO" id="GO:0019915">
    <property type="term" value="P:lipid storage"/>
    <property type="evidence" value="ECO:0000266"/>
    <property type="project" value="RGD"/>
</dbReference>
<dbReference type="GO" id="GO:0030901">
    <property type="term" value="P:midbrain development"/>
    <property type="evidence" value="ECO:0000270"/>
    <property type="project" value="RGD"/>
</dbReference>
<dbReference type="GO" id="GO:1901383">
    <property type="term" value="P:negative regulation of chorionic trophoblast cell proliferation"/>
    <property type="evidence" value="ECO:0000266"/>
    <property type="project" value="RGD"/>
</dbReference>
<dbReference type="GO" id="GO:0046676">
    <property type="term" value="P:negative regulation of insulin secretion"/>
    <property type="evidence" value="ECO:0000266"/>
    <property type="project" value="RGD"/>
</dbReference>
<dbReference type="GO" id="GO:1901164">
    <property type="term" value="P:negative regulation of trophoblast cell migration"/>
    <property type="evidence" value="ECO:0000266"/>
    <property type="project" value="RGD"/>
</dbReference>
<dbReference type="GO" id="GO:0007399">
    <property type="term" value="P:nervous system development"/>
    <property type="evidence" value="ECO:0000318"/>
    <property type="project" value="GO_Central"/>
</dbReference>
<dbReference type="GO" id="GO:0038092">
    <property type="term" value="P:nodal signaling pathway"/>
    <property type="evidence" value="ECO:0000266"/>
    <property type="project" value="RGD"/>
</dbReference>
<dbReference type="GO" id="GO:0001541">
    <property type="term" value="P:ovarian follicle development"/>
    <property type="evidence" value="ECO:0000270"/>
    <property type="project" value="RGD"/>
</dbReference>
<dbReference type="GO" id="GO:0043065">
    <property type="term" value="P:positive regulation of apoptotic process"/>
    <property type="evidence" value="ECO:0000266"/>
    <property type="project" value="RGD"/>
</dbReference>
<dbReference type="GO" id="GO:0006468">
    <property type="term" value="P:protein phosphorylation"/>
    <property type="evidence" value="ECO:0000305"/>
    <property type="project" value="UniProtKB"/>
</dbReference>
<dbReference type="GO" id="GO:0042981">
    <property type="term" value="P:regulation of apoptotic process"/>
    <property type="evidence" value="ECO:0000314"/>
    <property type="project" value="UniProtKB"/>
</dbReference>
<dbReference type="GO" id="GO:1904044">
    <property type="term" value="P:response to aldosterone"/>
    <property type="evidence" value="ECO:0000270"/>
    <property type="project" value="RGD"/>
</dbReference>
<dbReference type="GO" id="GO:0002021">
    <property type="term" value="P:response to dietary excess"/>
    <property type="evidence" value="ECO:0000266"/>
    <property type="project" value="RGD"/>
</dbReference>
<dbReference type="GO" id="GO:0009749">
    <property type="term" value="P:response to glucose"/>
    <property type="evidence" value="ECO:0000270"/>
    <property type="project" value="RGD"/>
</dbReference>
<dbReference type="GO" id="GO:0032868">
    <property type="term" value="P:response to insulin"/>
    <property type="evidence" value="ECO:0000266"/>
    <property type="project" value="RGD"/>
</dbReference>
<dbReference type="GO" id="GO:0033993">
    <property type="term" value="P:response to lipid"/>
    <property type="evidence" value="ECO:0000270"/>
    <property type="project" value="RGD"/>
</dbReference>
<dbReference type="GO" id="GO:0009410">
    <property type="term" value="P:response to xenobiotic stimulus"/>
    <property type="evidence" value="ECO:0000270"/>
    <property type="project" value="RGD"/>
</dbReference>
<dbReference type="GO" id="GO:0060395">
    <property type="term" value="P:SMAD protein signal transduction"/>
    <property type="evidence" value="ECO:0000316"/>
    <property type="project" value="BHF-UCL"/>
</dbReference>
<dbReference type="GO" id="GO:0007181">
    <property type="term" value="P:transforming growth factor beta receptor complex assembly"/>
    <property type="evidence" value="ECO:0000314"/>
    <property type="project" value="RGD"/>
</dbReference>
<dbReference type="GO" id="GO:0001834">
    <property type="term" value="P:trophectodermal cell proliferation"/>
    <property type="evidence" value="ECO:0000266"/>
    <property type="project" value="RGD"/>
</dbReference>
<dbReference type="CDD" id="cd14143">
    <property type="entry name" value="STKc_TGFbR1_ACVR1b_ACVR1c"/>
    <property type="match status" value="1"/>
</dbReference>
<dbReference type="CDD" id="cd23540">
    <property type="entry name" value="TFP_LU_ECD_ALK7"/>
    <property type="match status" value="1"/>
</dbReference>
<dbReference type="FunFam" id="1.10.510.10:FF:000045">
    <property type="entry name" value="Receptor protein serine/threonine kinase"/>
    <property type="match status" value="1"/>
</dbReference>
<dbReference type="FunFam" id="2.10.60.10:FF:000007">
    <property type="entry name" value="Receptor protein serine/threonine kinase"/>
    <property type="match status" value="1"/>
</dbReference>
<dbReference type="FunFam" id="3.30.200.20:FF:000023">
    <property type="entry name" value="Receptor protein serine/threonine kinase"/>
    <property type="match status" value="1"/>
</dbReference>
<dbReference type="Gene3D" id="2.10.60.10">
    <property type="entry name" value="CD59"/>
    <property type="match status" value="1"/>
</dbReference>
<dbReference type="Gene3D" id="3.30.200.20">
    <property type="entry name" value="Phosphorylase Kinase, domain 1"/>
    <property type="match status" value="1"/>
</dbReference>
<dbReference type="Gene3D" id="1.10.510.10">
    <property type="entry name" value="Transferase(Phosphotransferase) domain 1"/>
    <property type="match status" value="1"/>
</dbReference>
<dbReference type="InterPro" id="IPR000472">
    <property type="entry name" value="Activin_recp"/>
</dbReference>
<dbReference type="InterPro" id="IPR003605">
    <property type="entry name" value="GS_dom"/>
</dbReference>
<dbReference type="InterPro" id="IPR011009">
    <property type="entry name" value="Kinase-like_dom_sf"/>
</dbReference>
<dbReference type="InterPro" id="IPR000719">
    <property type="entry name" value="Prot_kinase_dom"/>
</dbReference>
<dbReference type="InterPro" id="IPR017441">
    <property type="entry name" value="Protein_kinase_ATP_BS"/>
</dbReference>
<dbReference type="InterPro" id="IPR001245">
    <property type="entry name" value="Ser-Thr/Tyr_kinase_cat_dom"/>
</dbReference>
<dbReference type="InterPro" id="IPR008271">
    <property type="entry name" value="Ser/Thr_kinase_AS"/>
</dbReference>
<dbReference type="InterPro" id="IPR045860">
    <property type="entry name" value="Snake_toxin-like_sf"/>
</dbReference>
<dbReference type="InterPro" id="IPR000333">
    <property type="entry name" value="TGFB_receptor"/>
</dbReference>
<dbReference type="PANTHER" id="PTHR23255:SF58">
    <property type="entry name" value="ACTIVIN RECEPTOR TYPE-1C"/>
    <property type="match status" value="1"/>
</dbReference>
<dbReference type="PANTHER" id="PTHR23255">
    <property type="entry name" value="TRANSFORMING GROWTH FACTOR-BETA RECEPTOR TYPE I AND II"/>
    <property type="match status" value="1"/>
</dbReference>
<dbReference type="Pfam" id="PF01064">
    <property type="entry name" value="Activin_recp"/>
    <property type="match status" value="1"/>
</dbReference>
<dbReference type="Pfam" id="PF07714">
    <property type="entry name" value="PK_Tyr_Ser-Thr"/>
    <property type="match status" value="1"/>
</dbReference>
<dbReference type="Pfam" id="PF08515">
    <property type="entry name" value="TGF_beta_GS"/>
    <property type="match status" value="1"/>
</dbReference>
<dbReference type="SMART" id="SM00467">
    <property type="entry name" value="GS"/>
    <property type="match status" value="1"/>
</dbReference>
<dbReference type="SMART" id="SM00220">
    <property type="entry name" value="S_TKc"/>
    <property type="match status" value="1"/>
</dbReference>
<dbReference type="SUPFAM" id="SSF56112">
    <property type="entry name" value="Protein kinase-like (PK-like)"/>
    <property type="match status" value="1"/>
</dbReference>
<dbReference type="SUPFAM" id="SSF57302">
    <property type="entry name" value="Snake toxin-like"/>
    <property type="match status" value="1"/>
</dbReference>
<dbReference type="PROSITE" id="PS51256">
    <property type="entry name" value="GS"/>
    <property type="match status" value="1"/>
</dbReference>
<dbReference type="PROSITE" id="PS00107">
    <property type="entry name" value="PROTEIN_KINASE_ATP"/>
    <property type="match status" value="1"/>
</dbReference>
<dbReference type="PROSITE" id="PS50011">
    <property type="entry name" value="PROTEIN_KINASE_DOM"/>
    <property type="match status" value="1"/>
</dbReference>
<dbReference type="PROSITE" id="PS00108">
    <property type="entry name" value="PROTEIN_KINASE_ST"/>
    <property type="match status" value="1"/>
</dbReference>
<protein>
    <recommendedName>
        <fullName>Activin receptor type-1C</fullName>
        <ecNumber>2.7.11.30</ecNumber>
    </recommendedName>
    <alternativeName>
        <fullName>Activin receptor type IC</fullName>
        <shortName>ACTR-IC</shortName>
    </alternativeName>
    <alternativeName>
        <fullName>Activin receptor-like kinase 7</fullName>
        <shortName>ALK-7</shortName>
    </alternativeName>
</protein>
<evidence type="ECO:0000250" key="1">
    <source>
        <dbReference type="UniProtKB" id="Q04771"/>
    </source>
</evidence>
<evidence type="ECO:0000250" key="2">
    <source>
        <dbReference type="UniProtKB" id="Q8K348"/>
    </source>
</evidence>
<evidence type="ECO:0000250" key="3">
    <source>
        <dbReference type="UniProtKB" id="Q8NER5"/>
    </source>
</evidence>
<evidence type="ECO:0000255" key="4"/>
<evidence type="ECO:0000255" key="5">
    <source>
        <dbReference type="PROSITE-ProRule" id="PRU00159"/>
    </source>
</evidence>
<evidence type="ECO:0000255" key="6">
    <source>
        <dbReference type="PROSITE-ProRule" id="PRU00585"/>
    </source>
</evidence>
<evidence type="ECO:0000255" key="7">
    <source>
        <dbReference type="PROSITE-ProRule" id="PRU10027"/>
    </source>
</evidence>
<evidence type="ECO:0000269" key="8">
    <source>
    </source>
</evidence>
<evidence type="ECO:0000269" key="9">
    <source>
    </source>
</evidence>
<evidence type="ECO:0000269" key="10">
    <source>
    </source>
</evidence>
<evidence type="ECO:0000269" key="11">
    <source>
    </source>
</evidence>
<evidence type="ECO:0000269" key="12">
    <source>
    </source>
</evidence>
<evidence type="ECO:0000269" key="13">
    <source>
    </source>
</evidence>
<evidence type="ECO:0000305" key="14"/>
<evidence type="ECO:0000312" key="15">
    <source>
        <dbReference type="EMBL" id="AAC52803.1"/>
    </source>
</evidence>
<evidence type="ECO:0000312" key="16">
    <source>
        <dbReference type="EMBL" id="AAC52919.1"/>
    </source>
</evidence>
<proteinExistence type="evidence at protein level"/>
<keyword id="KW-0053">Apoptosis</keyword>
<keyword id="KW-0067">ATP-binding</keyword>
<keyword id="KW-0903">Direct protein sequencing</keyword>
<keyword id="KW-0418">Kinase</keyword>
<keyword id="KW-0460">Magnesium</keyword>
<keyword id="KW-0464">Manganese</keyword>
<keyword id="KW-0472">Membrane</keyword>
<keyword id="KW-0479">Metal-binding</keyword>
<keyword id="KW-0547">Nucleotide-binding</keyword>
<keyword id="KW-0675">Receptor</keyword>
<keyword id="KW-1185">Reference proteome</keyword>
<keyword id="KW-0723">Serine/threonine-protein kinase</keyword>
<keyword id="KW-0732">Signal</keyword>
<keyword id="KW-0808">Transferase</keyword>
<keyword id="KW-0812">Transmembrane</keyword>
<keyword id="KW-1133">Transmembrane helix</keyword>
<gene>
    <name evidence="15" type="primary">Acvr1c</name>
    <name type="synonym">Alk7</name>
</gene>
<name>ACV1C_RAT</name>
<comment type="function">
    <text evidence="2 3 8 9 10 11 13">Serine/threonine protein kinase which forms a receptor complex on ligand binding. The receptor complex consists of 2 type II and 2 type I transmembrane serine/threonine kinases. Type II receptors phosphorylate and activate type I receptors which autophosphorylate, then bind and activate SMAD transcriptional regulators, SMAD2 and SMAD3. Receptor for activin AB, activin B, activin E and NODAL (PubMed:15196700). Upon NODAL binding, activation results in increased apoptosis and reduced proliferation through suppression of AKT signaling and the activation of Smad2-dependent signaling pathway in pancreatic beta-cells, trophoblasts, epithelial or neuronal cells (PubMed:9920806, PubMed:11084022, PubMed:22550067). Acts as a positive regulator for macrophage activation partially through down-regulation of PPARG expression (By similarity).</text>
</comment>
<comment type="catalytic activity">
    <reaction>
        <text>L-threonyl-[receptor-protein] + ATP = O-phospho-L-threonyl-[receptor-protein] + ADP + H(+)</text>
        <dbReference type="Rhea" id="RHEA:44880"/>
        <dbReference type="Rhea" id="RHEA-COMP:11024"/>
        <dbReference type="Rhea" id="RHEA-COMP:11025"/>
        <dbReference type="ChEBI" id="CHEBI:15378"/>
        <dbReference type="ChEBI" id="CHEBI:30013"/>
        <dbReference type="ChEBI" id="CHEBI:30616"/>
        <dbReference type="ChEBI" id="CHEBI:61977"/>
        <dbReference type="ChEBI" id="CHEBI:456216"/>
        <dbReference type="EC" id="2.7.11.30"/>
    </reaction>
</comment>
<comment type="catalytic activity">
    <reaction>
        <text>L-seryl-[receptor-protein] + ATP = O-phospho-L-seryl-[receptor-protein] + ADP + H(+)</text>
        <dbReference type="Rhea" id="RHEA:18673"/>
        <dbReference type="Rhea" id="RHEA-COMP:11022"/>
        <dbReference type="Rhea" id="RHEA-COMP:11023"/>
        <dbReference type="ChEBI" id="CHEBI:15378"/>
        <dbReference type="ChEBI" id="CHEBI:29999"/>
        <dbReference type="ChEBI" id="CHEBI:30616"/>
        <dbReference type="ChEBI" id="CHEBI:83421"/>
        <dbReference type="ChEBI" id="CHEBI:456216"/>
        <dbReference type="EC" id="2.7.11.30"/>
    </reaction>
</comment>
<comment type="cofactor">
    <cofactor evidence="14">
        <name>Mg(2+)</name>
        <dbReference type="ChEBI" id="CHEBI:18420"/>
    </cofactor>
    <cofactor evidence="14">
        <name>Mn(2+)</name>
        <dbReference type="ChEBI" id="CHEBI:29035"/>
    </cofactor>
</comment>
<comment type="subunit">
    <text>Binds the type 2 receptor protein ACVR2A.</text>
</comment>
<comment type="subcellular location">
    <subcellularLocation>
        <location evidence="9">Membrane</location>
        <topology evidence="9">Single-pass type I membrane protein</topology>
    </subcellularLocation>
</comment>
<comment type="tissue specificity">
    <text evidence="8 9 11 12 13">Expressed in brain, kidney, lung, liver, testis, ovary, adrenal gland, heart, prostate, gastrointestinal tract, and spleen. Distributed throughout both adult and embryonic central nervous system and pancreatic islet cells.</text>
</comment>
<comment type="similarity">
    <text evidence="14">Belongs to the protein kinase superfamily. TKL Ser/Thr protein kinase family. TGFB receptor subfamily.</text>
</comment>
<reference evidence="14 15" key="1">
    <citation type="journal article" date="1996" name="Mol. Cell. Neurosci.">
        <title>Molecular cloning of a novel type I receptor serine/threonine kinase for the TGF beta superfamily from rat brain.</title>
        <authorList>
            <person name="Tsuchida K."/>
            <person name="Sawchenko P.E."/>
            <person name="Nishikawa S."/>
            <person name="Vale W.W."/>
        </authorList>
    </citation>
    <scope>NUCLEOTIDE SEQUENCE [MRNA]</scope>
    <scope>FUNCTION</scope>
    <scope>TISSUE SPECIFICITY</scope>
    <scope>MUTAGENESIS OF THR-194 AND LYS-222</scope>
    <source>
        <strain evidence="15">Sprague-Dawley</strain>
        <tissue evidence="15">Brain</tissue>
    </source>
</reference>
<reference evidence="14 16" key="2">
    <citation type="journal article" date="1996" name="J. Biol. Chem.">
        <title>A novel type I receptor serine-threonine kinase predominantly expressed in the adult central nervous system.</title>
        <authorList>
            <person name="Ryden M."/>
            <person name="Imamura T."/>
            <person name="Joernvall H."/>
            <person name="Belluardo N."/>
            <person name="Neveu I."/>
            <person name="Trupp M."/>
            <person name="Okadome T."/>
            <person name="ten Dijke P."/>
            <person name="Ibanez C.F."/>
        </authorList>
    </citation>
    <scope>NUCLEOTIDE SEQUENCE [MRNA]</scope>
    <scope>TISSUE SPECIFICITY</scope>
    <source>
        <tissue evidence="12">Brain</tissue>
    </source>
</reference>
<reference evidence="14" key="3">
    <citation type="journal article" date="2004" name="Mol. Cell. Endocrinol.">
        <title>Activin isoforms signal through type I receptor serine/threonine kinase ALK7.</title>
        <authorList>
            <person name="Tsuchida K."/>
            <person name="Nakatani M."/>
            <person name="Yamakawa N."/>
            <person name="Hashimoto O."/>
            <person name="Hasegawa Y."/>
            <person name="Sugino H."/>
        </authorList>
    </citation>
    <scope>PROTEIN SEQUENCE OF 139-159</scope>
    <scope>FUNCTION</scope>
    <scope>TISSUE SPECIFICITY</scope>
    <scope>SUBCELLULAR LOCATION</scope>
    <scope>INTERACTION WITH ACVR2A; ACTIVIN AB AND B</scope>
</reference>
<reference evidence="14" key="4">
    <citation type="journal article" date="1999" name="Biochem. Biophys. Res. Commun.">
        <title>The MH1 domains of smad2 and smad3 are involved in the regulation of the ALK7 signals.</title>
        <authorList>
            <person name="Watanabe R."/>
            <person name="Yamada Y."/>
            <person name="Ihara Y."/>
            <person name="Someya Y."/>
            <person name="Kubota A."/>
            <person name="Kagimoto S."/>
            <person name="Kuroe A."/>
            <person name="Iwakura T."/>
            <person name="Shen Z.-P."/>
            <person name="Inada A."/>
            <person name="Adachi T."/>
            <person name="Ban N."/>
            <person name="Miyawaki K."/>
            <person name="Sunaga Y."/>
            <person name="Tsuda K."/>
            <person name="Seino Y."/>
        </authorList>
    </citation>
    <scope>FUNCTION</scope>
    <scope>TISSUE SPECIFICITY</scope>
    <scope>MUTAGENESIS OF THR-194</scope>
</reference>
<reference evidence="14" key="5">
    <citation type="journal article" date="2001" name="J. Biol. Chem.">
        <title>The orphan receptor serine/threonine kinase ALK7 signals arrest of proliferation and morphological differentiation in a neuronal cell line.</title>
        <authorList>
            <person name="Joernvall H."/>
            <person name="Blokzijl A."/>
            <person name="ten Dijke P."/>
            <person name="Ibanez C.F."/>
        </authorList>
    </citation>
    <scope>FUNCTION</scope>
    <scope>TISSUE SPECIFICITY</scope>
</reference>
<reference key="6">
    <citation type="journal article" date="2012" name="Am. J. Physiol.">
        <title>Nodal induces apoptosis through activation of the ALK7 signaling pathway in pancreatic INS-1 beta-cells.</title>
        <authorList>
            <person name="Zhao F."/>
            <person name="Huang F."/>
            <person name="Tang M."/>
            <person name="Li X."/>
            <person name="Zhang N."/>
            <person name="Amfilochiadis A."/>
            <person name="Li Y."/>
            <person name="Hu R."/>
            <person name="Jin T."/>
            <person name="Peng C."/>
            <person name="Wang Q."/>
        </authorList>
    </citation>
    <scope>FUNCTION</scope>
</reference>